<gene>
    <name type="ORF">SPAPB1A10.08</name>
</gene>
<evidence type="ECO:0000269" key="1">
    <source>
    </source>
</evidence>
<evidence type="ECO:0000269" key="2">
    <source>
    </source>
</evidence>
<proteinExistence type="predicted"/>
<protein>
    <recommendedName>
        <fullName>Meiotically up-regulated protein PB1A10.08</fullName>
    </recommendedName>
</protein>
<accession>Q9HDY2</accession>
<feature type="chain" id="PRO_0000371804" description="Meiotically up-regulated protein PB1A10.08">
    <location>
        <begin position="1"/>
        <end position="416"/>
    </location>
</feature>
<name>YK18_SCHPO</name>
<comment type="function">
    <text evidence="1">May have a role in meiosis and sporulation.</text>
</comment>
<comment type="subcellular location">
    <subcellularLocation>
        <location evidence="2">Cytoplasm</location>
    </subcellularLocation>
    <text>Barrier septum.</text>
</comment>
<sequence>MMTRMELRPLEIGFSKALTEVAPVTCQCECWDHNLCSSQASEMDLIYQSQDTHSCASKQDAVFQLLSETKIPVPNRYRKISHRLSTLSNKKTLKSQLDRFLSSSKKLHNDDVNRGDYCFLLSTPVECSASTNSHSYDCLWNFSCNSFPEYSSYSASETSSVASYSYYSGPNPATPSSSSCNLVNANSLDIYLNINNLKKSKSVPRLRGQFMEPVEHNHPLSKSLEEQSSFLEQSKDASSNLTACNRSGSSLSSNFYSSRLSKKTSLASLNKSRASLQHKIMSLSRNIIRRVFHKPEVHLDPSASILNLSSSHGESNLTNGLLCQNFKLFQDDWLMEDCAPDANFTLYTPLQPWEKRSVKPEIRRPRLNPNFFRVFVLEAQMRRAGKLSANTAGRAQLIYLPKPAVTFSTSPLHVEL</sequence>
<organism>
    <name type="scientific">Schizosaccharomyces pombe (strain 972 / ATCC 24843)</name>
    <name type="common">Fission yeast</name>
    <dbReference type="NCBI Taxonomy" id="284812"/>
    <lineage>
        <taxon>Eukaryota</taxon>
        <taxon>Fungi</taxon>
        <taxon>Dikarya</taxon>
        <taxon>Ascomycota</taxon>
        <taxon>Taphrinomycotina</taxon>
        <taxon>Schizosaccharomycetes</taxon>
        <taxon>Schizosaccharomycetales</taxon>
        <taxon>Schizosaccharomycetaceae</taxon>
        <taxon>Schizosaccharomyces</taxon>
    </lineage>
</organism>
<dbReference type="EMBL" id="CU329670">
    <property type="protein sequence ID" value="CAC21481.2"/>
    <property type="molecule type" value="Genomic_DNA"/>
</dbReference>
<dbReference type="RefSeq" id="NP_593522.2">
    <property type="nucleotide sequence ID" value="NM_001018956.2"/>
</dbReference>
<dbReference type="BioGRID" id="279796">
    <property type="interactions" value="21"/>
</dbReference>
<dbReference type="iPTMnet" id="Q9HDY2"/>
<dbReference type="PaxDb" id="4896-SPAPB1A10.08.1"/>
<dbReference type="EnsemblFungi" id="SPAPB1A10.08.1">
    <property type="protein sequence ID" value="SPAPB1A10.08.1:pep"/>
    <property type="gene ID" value="SPAPB1A10.08"/>
</dbReference>
<dbReference type="KEGG" id="spo:2543374"/>
<dbReference type="PomBase" id="SPAPB1A10.08"/>
<dbReference type="VEuPathDB" id="FungiDB:SPAPB1A10.08"/>
<dbReference type="HOGENOM" id="CLU_660829_0_0_1"/>
<dbReference type="InParanoid" id="Q9HDY2"/>
<dbReference type="OMA" id="AQFISHP"/>
<dbReference type="PRO" id="PR:Q9HDY2"/>
<dbReference type="Proteomes" id="UP000002485">
    <property type="component" value="Chromosome I"/>
</dbReference>
<dbReference type="GO" id="GO:0032153">
    <property type="term" value="C:cell division site"/>
    <property type="evidence" value="ECO:0007005"/>
    <property type="project" value="PomBase"/>
</dbReference>
<dbReference type="GO" id="GO:0005829">
    <property type="term" value="C:cytosol"/>
    <property type="evidence" value="ECO:0007005"/>
    <property type="project" value="PomBase"/>
</dbReference>
<dbReference type="InterPro" id="IPR034443">
    <property type="entry name" value="PB1A10.08"/>
</dbReference>
<dbReference type="PANTHER" id="PTHR42051">
    <property type="entry name" value="MEIOTICALLY UP-REGULATED PROTEIN PB1A10.08"/>
    <property type="match status" value="1"/>
</dbReference>
<dbReference type="PANTHER" id="PTHR42051:SF1">
    <property type="entry name" value="MEIOTICALLY UP-REGULATED PROTEIN PB1A10.08"/>
    <property type="match status" value="1"/>
</dbReference>
<reference key="1">
    <citation type="journal article" date="2002" name="Nature">
        <title>The genome sequence of Schizosaccharomyces pombe.</title>
        <authorList>
            <person name="Wood V."/>
            <person name="Gwilliam R."/>
            <person name="Rajandream M.A."/>
            <person name="Lyne M.H."/>
            <person name="Lyne R."/>
            <person name="Stewart A."/>
            <person name="Sgouros J.G."/>
            <person name="Peat N."/>
            <person name="Hayles J."/>
            <person name="Baker S.G."/>
            <person name="Basham D."/>
            <person name="Bowman S."/>
            <person name="Brooks K."/>
            <person name="Brown D."/>
            <person name="Brown S."/>
            <person name="Chillingworth T."/>
            <person name="Churcher C.M."/>
            <person name="Collins M."/>
            <person name="Connor R."/>
            <person name="Cronin A."/>
            <person name="Davis P."/>
            <person name="Feltwell T."/>
            <person name="Fraser A."/>
            <person name="Gentles S."/>
            <person name="Goble A."/>
            <person name="Hamlin N."/>
            <person name="Harris D.E."/>
            <person name="Hidalgo J."/>
            <person name="Hodgson G."/>
            <person name="Holroyd S."/>
            <person name="Hornsby T."/>
            <person name="Howarth S."/>
            <person name="Huckle E.J."/>
            <person name="Hunt S."/>
            <person name="Jagels K."/>
            <person name="James K.D."/>
            <person name="Jones L."/>
            <person name="Jones M."/>
            <person name="Leather S."/>
            <person name="McDonald S."/>
            <person name="McLean J."/>
            <person name="Mooney P."/>
            <person name="Moule S."/>
            <person name="Mungall K.L."/>
            <person name="Murphy L.D."/>
            <person name="Niblett D."/>
            <person name="Odell C."/>
            <person name="Oliver K."/>
            <person name="O'Neil S."/>
            <person name="Pearson D."/>
            <person name="Quail M.A."/>
            <person name="Rabbinowitsch E."/>
            <person name="Rutherford K.M."/>
            <person name="Rutter S."/>
            <person name="Saunders D."/>
            <person name="Seeger K."/>
            <person name="Sharp S."/>
            <person name="Skelton J."/>
            <person name="Simmonds M.N."/>
            <person name="Squares R."/>
            <person name="Squares S."/>
            <person name="Stevens K."/>
            <person name="Taylor K."/>
            <person name="Taylor R.G."/>
            <person name="Tivey A."/>
            <person name="Walsh S.V."/>
            <person name="Warren T."/>
            <person name="Whitehead S."/>
            <person name="Woodward J.R."/>
            <person name="Volckaert G."/>
            <person name="Aert R."/>
            <person name="Robben J."/>
            <person name="Grymonprez B."/>
            <person name="Weltjens I."/>
            <person name="Vanstreels E."/>
            <person name="Rieger M."/>
            <person name="Schaefer M."/>
            <person name="Mueller-Auer S."/>
            <person name="Gabel C."/>
            <person name="Fuchs M."/>
            <person name="Duesterhoeft A."/>
            <person name="Fritzc C."/>
            <person name="Holzer E."/>
            <person name="Moestl D."/>
            <person name="Hilbert H."/>
            <person name="Borzym K."/>
            <person name="Langer I."/>
            <person name="Beck A."/>
            <person name="Lehrach H."/>
            <person name="Reinhardt R."/>
            <person name="Pohl T.M."/>
            <person name="Eger P."/>
            <person name="Zimmermann W."/>
            <person name="Wedler H."/>
            <person name="Wambutt R."/>
            <person name="Purnelle B."/>
            <person name="Goffeau A."/>
            <person name="Cadieu E."/>
            <person name="Dreano S."/>
            <person name="Gloux S."/>
            <person name="Lelaure V."/>
            <person name="Mottier S."/>
            <person name="Galibert F."/>
            <person name="Aves S.J."/>
            <person name="Xiang Z."/>
            <person name="Hunt C."/>
            <person name="Moore K."/>
            <person name="Hurst S.M."/>
            <person name="Lucas M."/>
            <person name="Rochet M."/>
            <person name="Gaillardin C."/>
            <person name="Tallada V.A."/>
            <person name="Garzon A."/>
            <person name="Thode G."/>
            <person name="Daga R.R."/>
            <person name="Cruzado L."/>
            <person name="Jimenez J."/>
            <person name="Sanchez M."/>
            <person name="del Rey F."/>
            <person name="Benito J."/>
            <person name="Dominguez A."/>
            <person name="Revuelta J.L."/>
            <person name="Moreno S."/>
            <person name="Armstrong J."/>
            <person name="Forsburg S.L."/>
            <person name="Cerutti L."/>
            <person name="Lowe T."/>
            <person name="McCombie W.R."/>
            <person name="Paulsen I."/>
            <person name="Potashkin J."/>
            <person name="Shpakovski G.V."/>
            <person name="Ussery D."/>
            <person name="Barrell B.G."/>
            <person name="Nurse P."/>
        </authorList>
    </citation>
    <scope>NUCLEOTIDE SEQUENCE [LARGE SCALE GENOMIC DNA]</scope>
    <source>
        <strain>972 / ATCC 24843</strain>
    </source>
</reference>
<reference key="2">
    <citation type="journal article" date="2011" name="Science">
        <title>Comparative functional genomics of the fission yeasts.</title>
        <authorList>
            <person name="Rhind N."/>
            <person name="Chen Z."/>
            <person name="Yassour M."/>
            <person name="Thompson D.A."/>
            <person name="Haas B.J."/>
            <person name="Habib N."/>
            <person name="Wapinski I."/>
            <person name="Roy S."/>
            <person name="Lin M.F."/>
            <person name="Heiman D.I."/>
            <person name="Young S.K."/>
            <person name="Furuya K."/>
            <person name="Guo Y."/>
            <person name="Pidoux A."/>
            <person name="Chen H.M."/>
            <person name="Robbertse B."/>
            <person name="Goldberg J.M."/>
            <person name="Aoki K."/>
            <person name="Bayne E.H."/>
            <person name="Berlin A.M."/>
            <person name="Desjardins C.A."/>
            <person name="Dobbs E."/>
            <person name="Dukaj L."/>
            <person name="Fan L."/>
            <person name="FitzGerald M.G."/>
            <person name="French C."/>
            <person name="Gujja S."/>
            <person name="Hansen K."/>
            <person name="Keifenheim D."/>
            <person name="Levin J.Z."/>
            <person name="Mosher R.A."/>
            <person name="Mueller C.A."/>
            <person name="Pfiffner J."/>
            <person name="Priest M."/>
            <person name="Russ C."/>
            <person name="Smialowska A."/>
            <person name="Swoboda P."/>
            <person name="Sykes S.M."/>
            <person name="Vaughn M."/>
            <person name="Vengrova S."/>
            <person name="Yoder R."/>
            <person name="Zeng Q."/>
            <person name="Allshire R."/>
            <person name="Baulcombe D."/>
            <person name="Birren B.W."/>
            <person name="Brown W."/>
            <person name="Ekwall K."/>
            <person name="Kellis M."/>
            <person name="Leatherwood J."/>
            <person name="Levin H."/>
            <person name="Margalit H."/>
            <person name="Martienssen R."/>
            <person name="Nieduszynski C.A."/>
            <person name="Spatafora J.W."/>
            <person name="Friedman N."/>
            <person name="Dalgaard J.Z."/>
            <person name="Baumann P."/>
            <person name="Niki H."/>
            <person name="Regev A."/>
            <person name="Nusbaum C."/>
        </authorList>
    </citation>
    <scope>REVISION OF GENE MODEL</scope>
</reference>
<reference key="3">
    <citation type="journal article" date="2002" name="Nat. Genet.">
        <title>The transcriptional program of meiosis and sporulation in fission yeast.</title>
        <authorList>
            <person name="Mata J."/>
            <person name="Lyne R."/>
            <person name="Burns G."/>
            <person name="Baehler J."/>
        </authorList>
    </citation>
    <scope>FUNCTION</scope>
</reference>
<reference key="4">
    <citation type="journal article" date="2006" name="Nat. Biotechnol.">
        <title>ORFeome cloning and global analysis of protein localization in the fission yeast Schizosaccharomyces pombe.</title>
        <authorList>
            <person name="Matsuyama A."/>
            <person name="Arai R."/>
            <person name="Yashiroda Y."/>
            <person name="Shirai A."/>
            <person name="Kamata A."/>
            <person name="Sekido S."/>
            <person name="Kobayashi Y."/>
            <person name="Hashimoto A."/>
            <person name="Hamamoto M."/>
            <person name="Hiraoka Y."/>
            <person name="Horinouchi S."/>
            <person name="Yoshida M."/>
        </authorList>
    </citation>
    <scope>SUBCELLULAR LOCATION [LARGE SCALE ANALYSIS]</scope>
</reference>
<keyword id="KW-0963">Cytoplasm</keyword>
<keyword id="KW-1185">Reference proteome</keyword>